<organism>
    <name type="scientific">Streptococcus gordonii (strain Challis / ATCC 35105 / BCRC 15272 / CH1 / DL1 / V288)</name>
    <dbReference type="NCBI Taxonomy" id="467705"/>
    <lineage>
        <taxon>Bacteria</taxon>
        <taxon>Bacillati</taxon>
        <taxon>Bacillota</taxon>
        <taxon>Bacilli</taxon>
        <taxon>Lactobacillales</taxon>
        <taxon>Streptococcaceae</taxon>
        <taxon>Streptococcus</taxon>
    </lineage>
</organism>
<sequence>MLIVKSSGKILKIIRESKNMSLKEVAAGDISVAQLSRYERGISSLTVDSFYSCLRNMSVSLAEFQYVYHNYREADDVVLSQKLSEAQRENNIVKLESILAGSEAMAQEFPEKKNYKLNTIVIRATLTSCNPDYQVSKGDIEFLTDYLFSVEEWGRYELWLFTNSVNLLTLETLETFASEMINRTQFYNNLPENRRRIIKMLLNVVSACIENNHLQVAMKFLNYIDNTKIPETDLYDRVLIKYHKALYSYKVGNPHARHDIEQCLSTFEYLDSFGVARKLKEQFERIQLTVVADLQIE</sequence>
<name>RGG_STRGC</name>
<protein>
    <recommendedName>
        <fullName>HTH-type transcriptional regulator rgg</fullName>
    </recommendedName>
</protein>
<keyword id="KW-0963">Cytoplasm</keyword>
<keyword id="KW-0238">DNA-binding</keyword>
<keyword id="KW-1185">Reference proteome</keyword>
<keyword id="KW-0804">Transcription</keyword>
<keyword id="KW-0805">Transcription regulation</keyword>
<comment type="function">
    <text>Regulates the expression of glucosyltransferase (gtfG).</text>
</comment>
<comment type="subcellular location">
    <subcellularLocation>
        <location evidence="2">Cytoplasm</location>
    </subcellularLocation>
</comment>
<dbReference type="EMBL" id="M89776">
    <property type="protein sequence ID" value="AAA26968.1"/>
    <property type="molecule type" value="Genomic_DNA"/>
</dbReference>
<dbReference type="EMBL" id="CP000725">
    <property type="protein sequence ID" value="ABV10604.1"/>
    <property type="molecule type" value="Genomic_DNA"/>
</dbReference>
<dbReference type="PIR" id="A41898">
    <property type="entry name" value="A41898"/>
</dbReference>
<dbReference type="RefSeq" id="WP_012000002.1">
    <property type="nucleotide sequence ID" value="NC_009785.1"/>
</dbReference>
<dbReference type="SMR" id="P49330"/>
<dbReference type="STRING" id="467705.SGO_0496"/>
<dbReference type="KEGG" id="sgo:SGO_0496"/>
<dbReference type="eggNOG" id="COG1396">
    <property type="taxonomic scope" value="Bacteria"/>
</dbReference>
<dbReference type="HOGENOM" id="CLU_072045_1_2_9"/>
<dbReference type="Proteomes" id="UP000001131">
    <property type="component" value="Chromosome"/>
</dbReference>
<dbReference type="GO" id="GO:0005737">
    <property type="term" value="C:cytoplasm"/>
    <property type="evidence" value="ECO:0007669"/>
    <property type="project" value="UniProtKB-SubCell"/>
</dbReference>
<dbReference type="GO" id="GO:0003677">
    <property type="term" value="F:DNA binding"/>
    <property type="evidence" value="ECO:0007669"/>
    <property type="project" value="UniProtKB-KW"/>
</dbReference>
<dbReference type="CDD" id="cd00093">
    <property type="entry name" value="HTH_XRE"/>
    <property type="match status" value="1"/>
</dbReference>
<dbReference type="Gene3D" id="1.25.40.400">
    <property type="match status" value="1"/>
</dbReference>
<dbReference type="Gene3D" id="1.10.260.40">
    <property type="entry name" value="lambda repressor-like DNA-binding domains"/>
    <property type="match status" value="1"/>
</dbReference>
<dbReference type="InterPro" id="IPR001387">
    <property type="entry name" value="Cro/C1-type_HTH"/>
</dbReference>
<dbReference type="InterPro" id="IPR053163">
    <property type="entry name" value="HTH-type_regulator_Rgg"/>
</dbReference>
<dbReference type="InterPro" id="IPR010982">
    <property type="entry name" value="Lambda_DNA-bd_dom_sf"/>
</dbReference>
<dbReference type="InterPro" id="IPR010057">
    <property type="entry name" value="Transcription_activator_Rgg_C"/>
</dbReference>
<dbReference type="NCBIfam" id="TIGR01716">
    <property type="entry name" value="RGG_Cterm"/>
    <property type="match status" value="1"/>
</dbReference>
<dbReference type="PANTHER" id="PTHR37038:SF12">
    <property type="entry name" value="TRANSCRIPTIONAL REGULATOR"/>
    <property type="match status" value="1"/>
</dbReference>
<dbReference type="PANTHER" id="PTHR37038">
    <property type="entry name" value="TRANSCRIPTIONAL REGULATOR-RELATED"/>
    <property type="match status" value="1"/>
</dbReference>
<dbReference type="Pfam" id="PF01381">
    <property type="entry name" value="HTH_3"/>
    <property type="match status" value="1"/>
</dbReference>
<dbReference type="Pfam" id="PF21259">
    <property type="entry name" value="Rgg_C"/>
    <property type="match status" value="1"/>
</dbReference>
<dbReference type="SMART" id="SM00530">
    <property type="entry name" value="HTH_XRE"/>
    <property type="match status" value="1"/>
</dbReference>
<dbReference type="SUPFAM" id="SSF47413">
    <property type="entry name" value="lambda repressor-like DNA-binding domains"/>
    <property type="match status" value="1"/>
</dbReference>
<dbReference type="PROSITE" id="PS50943">
    <property type="entry name" value="HTH_CROC1"/>
    <property type="match status" value="1"/>
</dbReference>
<reference key="1">
    <citation type="journal article" date="1992" name="J. Bacteriol.">
        <title>Identification of a gene, rgg, which regulates expression of glucosyltransferase and influences the Spp phenotype of Streptococcus gordonii Challis.</title>
        <authorList>
            <person name="Sulavik M.C."/>
            <person name="Tardif G."/>
            <person name="Clewell D.B."/>
        </authorList>
    </citation>
    <scope>NUCLEOTIDE SEQUENCE [GENOMIC DNA]</scope>
</reference>
<reference key="2">
    <citation type="journal article" date="2007" name="J. Bacteriol.">
        <title>Genome-wide transcriptional changes in Streptococcus gordonii in response to competence signaling peptide.</title>
        <authorList>
            <person name="Vickerman M.M."/>
            <person name="Iobst S."/>
            <person name="Jesionowski A.M."/>
            <person name="Gill S.R."/>
        </authorList>
    </citation>
    <scope>NUCLEOTIDE SEQUENCE [LARGE SCALE GENOMIC DNA]</scope>
    <source>
        <strain>Challis / ATCC 35105 / BCRC 15272 / CH1 / DL1 / V288</strain>
    </source>
</reference>
<evidence type="ECO:0000255" key="1">
    <source>
        <dbReference type="PROSITE-ProRule" id="PRU00257"/>
    </source>
</evidence>
<evidence type="ECO:0000305" key="2"/>
<feature type="chain" id="PRO_0000149734" description="HTH-type transcriptional regulator rgg">
    <location>
        <begin position="1"/>
        <end position="297"/>
    </location>
</feature>
<feature type="domain" description="HTH cro/C1-type" evidence="1">
    <location>
        <begin position="11"/>
        <end position="64"/>
    </location>
</feature>
<feature type="DNA-binding region" description="H-T-H motif" evidence="1">
    <location>
        <begin position="22"/>
        <end position="41"/>
    </location>
</feature>
<gene>
    <name type="primary">rgg</name>
    <name type="ordered locus">SGO_0496</name>
</gene>
<accession>P49330</accession>
<accession>A8AVK2</accession>
<proteinExistence type="predicted"/>